<proteinExistence type="inferred from homology"/>
<feature type="chain" id="PRO_1000128019" description="Small ribosomal subunit protein uS19">
    <location>
        <begin position="1"/>
        <end position="91"/>
    </location>
</feature>
<gene>
    <name evidence="1" type="primary">rpsS</name>
    <name evidence="1" type="synonym">rps19</name>
    <name type="ordered locus">P9211_16741</name>
</gene>
<dbReference type="EMBL" id="CP000878">
    <property type="protein sequence ID" value="ABX09605.1"/>
    <property type="molecule type" value="Genomic_DNA"/>
</dbReference>
<dbReference type="RefSeq" id="WP_012196225.1">
    <property type="nucleotide sequence ID" value="NC_009976.1"/>
</dbReference>
<dbReference type="SMR" id="A9BCP3"/>
<dbReference type="STRING" id="93059.P9211_16741"/>
<dbReference type="KEGG" id="pmj:P9211_16741"/>
<dbReference type="eggNOG" id="COG0185">
    <property type="taxonomic scope" value="Bacteria"/>
</dbReference>
<dbReference type="HOGENOM" id="CLU_144911_0_1_3"/>
<dbReference type="OrthoDB" id="9797833at2"/>
<dbReference type="Proteomes" id="UP000000788">
    <property type="component" value="Chromosome"/>
</dbReference>
<dbReference type="GO" id="GO:0005737">
    <property type="term" value="C:cytoplasm"/>
    <property type="evidence" value="ECO:0007669"/>
    <property type="project" value="UniProtKB-ARBA"/>
</dbReference>
<dbReference type="GO" id="GO:0015935">
    <property type="term" value="C:small ribosomal subunit"/>
    <property type="evidence" value="ECO:0007669"/>
    <property type="project" value="InterPro"/>
</dbReference>
<dbReference type="GO" id="GO:0019843">
    <property type="term" value="F:rRNA binding"/>
    <property type="evidence" value="ECO:0007669"/>
    <property type="project" value="UniProtKB-UniRule"/>
</dbReference>
<dbReference type="GO" id="GO:0003735">
    <property type="term" value="F:structural constituent of ribosome"/>
    <property type="evidence" value="ECO:0007669"/>
    <property type="project" value="InterPro"/>
</dbReference>
<dbReference type="GO" id="GO:0000028">
    <property type="term" value="P:ribosomal small subunit assembly"/>
    <property type="evidence" value="ECO:0007669"/>
    <property type="project" value="TreeGrafter"/>
</dbReference>
<dbReference type="GO" id="GO:0006412">
    <property type="term" value="P:translation"/>
    <property type="evidence" value="ECO:0007669"/>
    <property type="project" value="UniProtKB-UniRule"/>
</dbReference>
<dbReference type="FunFam" id="3.30.860.10:FF:000001">
    <property type="entry name" value="30S ribosomal protein S19"/>
    <property type="match status" value="1"/>
</dbReference>
<dbReference type="Gene3D" id="3.30.860.10">
    <property type="entry name" value="30s Ribosomal Protein S19, Chain A"/>
    <property type="match status" value="1"/>
</dbReference>
<dbReference type="HAMAP" id="MF_00531">
    <property type="entry name" value="Ribosomal_uS19"/>
    <property type="match status" value="1"/>
</dbReference>
<dbReference type="InterPro" id="IPR002222">
    <property type="entry name" value="Ribosomal_uS19"/>
</dbReference>
<dbReference type="InterPro" id="IPR005732">
    <property type="entry name" value="Ribosomal_uS19_bac-type"/>
</dbReference>
<dbReference type="InterPro" id="IPR020934">
    <property type="entry name" value="Ribosomal_uS19_CS"/>
</dbReference>
<dbReference type="InterPro" id="IPR023575">
    <property type="entry name" value="Ribosomal_uS19_SF"/>
</dbReference>
<dbReference type="NCBIfam" id="TIGR01050">
    <property type="entry name" value="rpsS_bact"/>
    <property type="match status" value="1"/>
</dbReference>
<dbReference type="PANTHER" id="PTHR11880">
    <property type="entry name" value="RIBOSOMAL PROTEIN S19P FAMILY MEMBER"/>
    <property type="match status" value="1"/>
</dbReference>
<dbReference type="PANTHER" id="PTHR11880:SF8">
    <property type="entry name" value="SMALL RIBOSOMAL SUBUNIT PROTEIN US19M"/>
    <property type="match status" value="1"/>
</dbReference>
<dbReference type="Pfam" id="PF00203">
    <property type="entry name" value="Ribosomal_S19"/>
    <property type="match status" value="1"/>
</dbReference>
<dbReference type="PIRSF" id="PIRSF002144">
    <property type="entry name" value="Ribosomal_S19"/>
    <property type="match status" value="1"/>
</dbReference>
<dbReference type="PRINTS" id="PR00975">
    <property type="entry name" value="RIBOSOMALS19"/>
</dbReference>
<dbReference type="SUPFAM" id="SSF54570">
    <property type="entry name" value="Ribosomal protein S19"/>
    <property type="match status" value="1"/>
</dbReference>
<dbReference type="PROSITE" id="PS00323">
    <property type="entry name" value="RIBOSOMAL_S19"/>
    <property type="match status" value="1"/>
</dbReference>
<accession>A9BCP3</accession>
<reference key="1">
    <citation type="journal article" date="2007" name="PLoS Genet.">
        <title>Patterns and implications of gene gain and loss in the evolution of Prochlorococcus.</title>
        <authorList>
            <person name="Kettler G.C."/>
            <person name="Martiny A.C."/>
            <person name="Huang K."/>
            <person name="Zucker J."/>
            <person name="Coleman M.L."/>
            <person name="Rodrigue S."/>
            <person name="Chen F."/>
            <person name="Lapidus A."/>
            <person name="Ferriera S."/>
            <person name="Johnson J."/>
            <person name="Steglich C."/>
            <person name="Church G.M."/>
            <person name="Richardson P."/>
            <person name="Chisholm S.W."/>
        </authorList>
    </citation>
    <scope>NUCLEOTIDE SEQUENCE [LARGE SCALE GENOMIC DNA]</scope>
    <source>
        <strain>MIT 9211</strain>
    </source>
</reference>
<keyword id="KW-1185">Reference proteome</keyword>
<keyword id="KW-0687">Ribonucleoprotein</keyword>
<keyword id="KW-0689">Ribosomal protein</keyword>
<keyword id="KW-0694">RNA-binding</keyword>
<keyword id="KW-0699">rRNA-binding</keyword>
<evidence type="ECO:0000255" key="1">
    <source>
        <dbReference type="HAMAP-Rule" id="MF_00531"/>
    </source>
</evidence>
<evidence type="ECO:0000305" key="2"/>
<organism>
    <name type="scientific">Prochlorococcus marinus (strain MIT 9211)</name>
    <dbReference type="NCBI Taxonomy" id="93059"/>
    <lineage>
        <taxon>Bacteria</taxon>
        <taxon>Bacillati</taxon>
        <taxon>Cyanobacteriota</taxon>
        <taxon>Cyanophyceae</taxon>
        <taxon>Synechococcales</taxon>
        <taxon>Prochlorococcaceae</taxon>
        <taxon>Prochlorococcus</taxon>
    </lineage>
</organism>
<protein>
    <recommendedName>
        <fullName evidence="1">Small ribosomal subunit protein uS19</fullName>
    </recommendedName>
    <alternativeName>
        <fullName evidence="2">30S ribosomal protein S19</fullName>
    </alternativeName>
</protein>
<comment type="function">
    <text evidence="1">Protein S19 forms a complex with S13 that binds strongly to the 16S ribosomal RNA.</text>
</comment>
<comment type="similarity">
    <text evidence="1">Belongs to the universal ribosomal protein uS19 family.</text>
</comment>
<name>RS19_PROM4</name>
<sequence length="91" mass="10136">MGRSLKKGPFIADSLLKKVEKQNSNDDRSVIKTWSRASTILPVMIGHTIAVHNGKSHIPVFITEQMVGHKLGEFAPTRTYKGHIKDKKGAR</sequence>